<dbReference type="EC" id="2.3.1.286" evidence="2"/>
<dbReference type="EMBL" id="AE004091">
    <property type="protein sequence ID" value="AAG04586.1"/>
    <property type="molecule type" value="Genomic_DNA"/>
</dbReference>
<dbReference type="PIR" id="A83495">
    <property type="entry name" value="A83495"/>
</dbReference>
<dbReference type="RefSeq" id="NP_249888.1">
    <property type="nucleotide sequence ID" value="NC_002516.2"/>
</dbReference>
<dbReference type="RefSeq" id="WP_003112457.1">
    <property type="nucleotide sequence ID" value="NZ_QZGE01000006.1"/>
</dbReference>
<dbReference type="SMR" id="Q9I4E1"/>
<dbReference type="STRING" id="208964.PA1197"/>
<dbReference type="PaxDb" id="208964-PA1197"/>
<dbReference type="GeneID" id="879533"/>
<dbReference type="KEGG" id="pae:PA1197"/>
<dbReference type="PATRIC" id="fig|208964.12.peg.1243"/>
<dbReference type="PseudoCAP" id="PA1197"/>
<dbReference type="HOGENOM" id="CLU_023643_3_0_6"/>
<dbReference type="InParanoid" id="Q9I4E1"/>
<dbReference type="OrthoDB" id="9800582at2"/>
<dbReference type="PhylomeDB" id="Q9I4E1"/>
<dbReference type="BioCyc" id="PAER208964:G1FZ6-1222-MONOMER"/>
<dbReference type="Proteomes" id="UP000002438">
    <property type="component" value="Chromosome"/>
</dbReference>
<dbReference type="GO" id="GO:0005737">
    <property type="term" value="C:cytoplasm"/>
    <property type="evidence" value="ECO:0007669"/>
    <property type="project" value="UniProtKB-SubCell"/>
</dbReference>
<dbReference type="GO" id="GO:0017136">
    <property type="term" value="F:histone deacetylase activity, NAD-dependent"/>
    <property type="evidence" value="ECO:0000318"/>
    <property type="project" value="GO_Central"/>
</dbReference>
<dbReference type="GO" id="GO:0046872">
    <property type="term" value="F:metal ion binding"/>
    <property type="evidence" value="ECO:0007669"/>
    <property type="project" value="UniProtKB-KW"/>
</dbReference>
<dbReference type="GO" id="GO:0070403">
    <property type="term" value="F:NAD+ binding"/>
    <property type="evidence" value="ECO:0000318"/>
    <property type="project" value="GO_Central"/>
</dbReference>
<dbReference type="CDD" id="cd01407">
    <property type="entry name" value="SIR2-fam"/>
    <property type="match status" value="1"/>
</dbReference>
<dbReference type="Gene3D" id="3.30.1600.10">
    <property type="entry name" value="SIR2/SIRT2 'Small Domain"/>
    <property type="match status" value="1"/>
</dbReference>
<dbReference type="Gene3D" id="3.40.50.1220">
    <property type="entry name" value="TPP-binding domain"/>
    <property type="match status" value="1"/>
</dbReference>
<dbReference type="InterPro" id="IPR029035">
    <property type="entry name" value="DHS-like_NAD/FAD-binding_dom"/>
</dbReference>
<dbReference type="InterPro" id="IPR050134">
    <property type="entry name" value="NAD-dep_sirtuin_deacylases"/>
</dbReference>
<dbReference type="InterPro" id="IPR003000">
    <property type="entry name" value="Sirtuin"/>
</dbReference>
<dbReference type="InterPro" id="IPR026591">
    <property type="entry name" value="Sirtuin_cat_small_dom_sf"/>
</dbReference>
<dbReference type="InterPro" id="IPR026590">
    <property type="entry name" value="Ssirtuin_cat_dom"/>
</dbReference>
<dbReference type="NCBIfam" id="NF001753">
    <property type="entry name" value="PRK00481.1-3"/>
    <property type="match status" value="1"/>
</dbReference>
<dbReference type="PANTHER" id="PTHR11085:SF4">
    <property type="entry name" value="NAD-DEPENDENT PROTEIN DEACYLASE"/>
    <property type="match status" value="1"/>
</dbReference>
<dbReference type="PANTHER" id="PTHR11085">
    <property type="entry name" value="NAD-DEPENDENT PROTEIN DEACYLASE SIRTUIN-5, MITOCHONDRIAL-RELATED"/>
    <property type="match status" value="1"/>
</dbReference>
<dbReference type="Pfam" id="PF02146">
    <property type="entry name" value="SIR2"/>
    <property type="match status" value="1"/>
</dbReference>
<dbReference type="SUPFAM" id="SSF52467">
    <property type="entry name" value="DHS-like NAD/FAD-binding domain"/>
    <property type="match status" value="1"/>
</dbReference>
<dbReference type="PROSITE" id="PS50305">
    <property type="entry name" value="SIRTUIN"/>
    <property type="match status" value="1"/>
</dbReference>
<gene>
    <name type="primary">cobB2</name>
    <name type="ordered locus">PA1197</name>
</gene>
<evidence type="ECO:0000250" key="1"/>
<evidence type="ECO:0000255" key="2">
    <source>
        <dbReference type="PROSITE-ProRule" id="PRU00236"/>
    </source>
</evidence>
<evidence type="ECO:0000305" key="3"/>
<keyword id="KW-0963">Cytoplasm</keyword>
<keyword id="KW-0479">Metal-binding</keyword>
<keyword id="KW-0520">NAD</keyword>
<keyword id="KW-1185">Reference proteome</keyword>
<keyword id="KW-0808">Transferase</keyword>
<keyword id="KW-0862">Zinc</keyword>
<protein>
    <recommendedName>
        <fullName>NAD-dependent protein deacylase 2</fullName>
        <ecNumber evidence="2">2.3.1.286</ecNumber>
    </recommendedName>
    <alternativeName>
        <fullName>Regulatory protein SIR2 homolog 2</fullName>
    </alternativeName>
</protein>
<proteinExistence type="inferred from homology"/>
<feature type="chain" id="PRO_0000110337" description="NAD-dependent protein deacylase 2">
    <location>
        <begin position="1"/>
        <end position="256"/>
    </location>
</feature>
<feature type="domain" description="Deacetylase sirtuin-type" evidence="2">
    <location>
        <begin position="1"/>
        <end position="256"/>
    </location>
</feature>
<feature type="active site" description="Proton acceptor" evidence="2">
    <location>
        <position position="128"/>
    </location>
</feature>
<feature type="binding site" evidence="1">
    <location>
        <begin position="25"/>
        <end position="44"/>
    </location>
    <ligand>
        <name>NAD(+)</name>
        <dbReference type="ChEBI" id="CHEBI:57540"/>
    </ligand>
</feature>
<feature type="binding site" evidence="1">
    <location>
        <begin position="108"/>
        <end position="111"/>
    </location>
    <ligand>
        <name>NAD(+)</name>
        <dbReference type="ChEBI" id="CHEBI:57540"/>
    </ligand>
</feature>
<feature type="binding site" evidence="2">
    <location>
        <position position="136"/>
    </location>
    <ligand>
        <name>Zn(2+)</name>
        <dbReference type="ChEBI" id="CHEBI:29105"/>
    </ligand>
</feature>
<feature type="binding site" evidence="2">
    <location>
        <position position="139"/>
    </location>
    <ligand>
        <name>Zn(2+)</name>
        <dbReference type="ChEBI" id="CHEBI:29105"/>
    </ligand>
</feature>
<feature type="binding site" evidence="2">
    <location>
        <position position="158"/>
    </location>
    <ligand>
        <name>Zn(2+)</name>
        <dbReference type="ChEBI" id="CHEBI:29105"/>
    </ligand>
</feature>
<feature type="binding site" evidence="2">
    <location>
        <position position="161"/>
    </location>
    <ligand>
        <name>Zn(2+)</name>
        <dbReference type="ChEBI" id="CHEBI:29105"/>
    </ligand>
</feature>
<feature type="binding site" evidence="1">
    <location>
        <begin position="199"/>
        <end position="201"/>
    </location>
    <ligand>
        <name>NAD(+)</name>
        <dbReference type="ChEBI" id="CHEBI:57540"/>
    </ligand>
</feature>
<feature type="binding site" evidence="1">
    <location>
        <begin position="225"/>
        <end position="227"/>
    </location>
    <ligand>
        <name>NAD(+)</name>
        <dbReference type="ChEBI" id="CHEBI:57540"/>
    </ligand>
</feature>
<feature type="binding site" evidence="1">
    <location>
        <position position="243"/>
    </location>
    <ligand>
        <name>NAD(+)</name>
        <dbReference type="ChEBI" id="CHEBI:57540"/>
    </ligand>
</feature>
<reference key="1">
    <citation type="journal article" date="2000" name="Nature">
        <title>Complete genome sequence of Pseudomonas aeruginosa PAO1, an opportunistic pathogen.</title>
        <authorList>
            <person name="Stover C.K."/>
            <person name="Pham X.-Q.T."/>
            <person name="Erwin A.L."/>
            <person name="Mizoguchi S.D."/>
            <person name="Warrener P."/>
            <person name="Hickey M.J."/>
            <person name="Brinkman F.S.L."/>
            <person name="Hufnagle W.O."/>
            <person name="Kowalik D.J."/>
            <person name="Lagrou M."/>
            <person name="Garber R.L."/>
            <person name="Goltry L."/>
            <person name="Tolentino E."/>
            <person name="Westbrock-Wadman S."/>
            <person name="Yuan Y."/>
            <person name="Brody L.L."/>
            <person name="Coulter S.N."/>
            <person name="Folger K.R."/>
            <person name="Kas A."/>
            <person name="Larbig K."/>
            <person name="Lim R.M."/>
            <person name="Smith K.A."/>
            <person name="Spencer D.H."/>
            <person name="Wong G.K.-S."/>
            <person name="Wu Z."/>
            <person name="Paulsen I.T."/>
            <person name="Reizer J."/>
            <person name="Saier M.H. Jr."/>
            <person name="Hancock R.E.W."/>
            <person name="Lory S."/>
            <person name="Olson M.V."/>
        </authorList>
    </citation>
    <scope>NUCLEOTIDE SEQUENCE [LARGE SCALE GENOMIC DNA]</scope>
    <source>
        <strain>ATCC 15692 / DSM 22644 / CIP 104116 / JCM 14847 / LMG 12228 / 1C / PRS 101 / PAO1</strain>
    </source>
</reference>
<organism>
    <name type="scientific">Pseudomonas aeruginosa (strain ATCC 15692 / DSM 22644 / CIP 104116 / JCM 14847 / LMG 12228 / 1C / PRS 101 / PAO1)</name>
    <dbReference type="NCBI Taxonomy" id="208964"/>
    <lineage>
        <taxon>Bacteria</taxon>
        <taxon>Pseudomonadati</taxon>
        <taxon>Pseudomonadota</taxon>
        <taxon>Gammaproteobacteria</taxon>
        <taxon>Pseudomonadales</taxon>
        <taxon>Pseudomonadaceae</taxon>
        <taxon>Pseudomonas</taxon>
    </lineage>
</organism>
<sequence>MDSHSPIATVAQALRRAERILVITGAGLSADSGMPTYRGLGGLYNGRTEEGLPIEAALSGPMLRRDPALCWKYLAELGKACLAARPNAGHEAIAELQKHKPECWVLTQNIDGFHRQAGSPAERLIEIHGELAPLYCQSCGAESGGLEEHLHGQLPPRCAACGGVLRPPVVLFEEMLPEEAIDTLYRELRKGFDAVLVVGTTASFPYIVEPVLRTRQAGGFTAEVNPGVTDLSERVDVKMTGRALDIMPQVVSHIYR</sequence>
<name>NPD2_PSEAE</name>
<accession>Q9I4E1</accession>
<comment type="function">
    <text evidence="1">NAD-dependent protein deacetylase which modulates the activities of several proteins which are inactive in their acetylated form.</text>
</comment>
<comment type="catalytic activity">
    <reaction evidence="2">
        <text>N(6)-acetyl-L-lysyl-[protein] + NAD(+) + H2O = 2''-O-acetyl-ADP-D-ribose + nicotinamide + L-lysyl-[protein]</text>
        <dbReference type="Rhea" id="RHEA:43636"/>
        <dbReference type="Rhea" id="RHEA-COMP:9752"/>
        <dbReference type="Rhea" id="RHEA-COMP:10731"/>
        <dbReference type="ChEBI" id="CHEBI:15377"/>
        <dbReference type="ChEBI" id="CHEBI:17154"/>
        <dbReference type="ChEBI" id="CHEBI:29969"/>
        <dbReference type="ChEBI" id="CHEBI:57540"/>
        <dbReference type="ChEBI" id="CHEBI:61930"/>
        <dbReference type="ChEBI" id="CHEBI:83767"/>
        <dbReference type="EC" id="2.3.1.286"/>
    </reaction>
</comment>
<comment type="cofactor">
    <cofactor evidence="1">
        <name>Zn(2+)</name>
        <dbReference type="ChEBI" id="CHEBI:29105"/>
    </cofactor>
    <text evidence="1">Binds 1 zinc ion per subunit.</text>
</comment>
<comment type="subcellular location">
    <subcellularLocation>
        <location evidence="1">Cytoplasm</location>
    </subcellularLocation>
</comment>
<comment type="similarity">
    <text evidence="3">Belongs to the sirtuin family. Class III subfamily.</text>
</comment>